<comment type="function">
    <text evidence="1">Acts as an alpha-ketoglutarate-dependent dioxygenase catalyzing hydroxylation of glutarate (GA) to L-2-hydroxyglutarate (L2HG). Functions in a L-lysine degradation pathway that proceeds via cadaverine, glutarate and L-2-hydroxyglutarate.</text>
</comment>
<comment type="catalytic activity">
    <reaction evidence="1">
        <text>glutarate + 2-oxoglutarate + O2 = (S)-2-hydroxyglutarate + succinate + CO2</text>
        <dbReference type="Rhea" id="RHEA:13821"/>
        <dbReference type="ChEBI" id="CHEBI:15379"/>
        <dbReference type="ChEBI" id="CHEBI:16526"/>
        <dbReference type="ChEBI" id="CHEBI:16782"/>
        <dbReference type="ChEBI" id="CHEBI:16810"/>
        <dbReference type="ChEBI" id="CHEBI:30031"/>
        <dbReference type="ChEBI" id="CHEBI:30921"/>
        <dbReference type="EC" id="1.14.11.64"/>
    </reaction>
    <physiologicalReaction direction="left-to-right" evidence="1">
        <dbReference type="Rhea" id="RHEA:13822"/>
    </physiologicalReaction>
</comment>
<comment type="cofactor">
    <cofactor evidence="1">
        <name>Fe(2+)</name>
        <dbReference type="ChEBI" id="CHEBI:29033"/>
    </cofactor>
    <text evidence="1">Binds 1 Fe(2+) ion per subunit.</text>
</comment>
<comment type="pathway">
    <text evidence="1">Amino-acid degradation.</text>
</comment>
<comment type="subunit">
    <text evidence="1">Homotetramer.</text>
</comment>
<comment type="similarity">
    <text evidence="1">Belongs to the glutarate hydroxylase family.</text>
</comment>
<accession>B7LDM7</accession>
<dbReference type="EC" id="1.14.11.64" evidence="1"/>
<dbReference type="EMBL" id="CU928145">
    <property type="protein sequence ID" value="CAU98796.1"/>
    <property type="molecule type" value="Genomic_DNA"/>
</dbReference>
<dbReference type="RefSeq" id="WP_000993087.1">
    <property type="nucleotide sequence ID" value="NC_011748.1"/>
</dbReference>
<dbReference type="SMR" id="B7LDM7"/>
<dbReference type="KEGG" id="eck:EC55989_2927"/>
<dbReference type="HOGENOM" id="CLU_075277_0_0_6"/>
<dbReference type="Proteomes" id="UP000000746">
    <property type="component" value="Chromosome"/>
</dbReference>
<dbReference type="GO" id="GO:0008198">
    <property type="term" value="F:ferrous iron binding"/>
    <property type="evidence" value="ECO:0007669"/>
    <property type="project" value="UniProtKB-UniRule"/>
</dbReference>
<dbReference type="GO" id="GO:0106343">
    <property type="term" value="F:glutarate dioxygenase activity"/>
    <property type="evidence" value="ECO:0007669"/>
    <property type="project" value="UniProtKB-EC"/>
</dbReference>
<dbReference type="GO" id="GO:0050498">
    <property type="term" value="F:oxidoreductase activity, acting on paired donors, with incorporation or reduction of molecular oxygen, with 2-oxoglutarate as one donor, and the other dehydrogenated"/>
    <property type="evidence" value="ECO:0007669"/>
    <property type="project" value="UniProtKB-UniRule"/>
</dbReference>
<dbReference type="GO" id="GO:0019477">
    <property type="term" value="P:L-lysine catabolic process"/>
    <property type="evidence" value="ECO:0007669"/>
    <property type="project" value="UniProtKB-UniRule"/>
</dbReference>
<dbReference type="CDD" id="cd00250">
    <property type="entry name" value="CAS_like"/>
    <property type="match status" value="1"/>
</dbReference>
<dbReference type="FunFam" id="3.60.130.10:FF:000004">
    <property type="entry name" value="Glutarate 2-hydroxylase"/>
    <property type="match status" value="1"/>
</dbReference>
<dbReference type="Gene3D" id="3.60.130.10">
    <property type="entry name" value="Clavaminate synthase-like"/>
    <property type="match status" value="1"/>
</dbReference>
<dbReference type="HAMAP" id="MF_01083">
    <property type="entry name" value="glutarate_hydroxylase"/>
    <property type="match status" value="1"/>
</dbReference>
<dbReference type="InterPro" id="IPR015038">
    <property type="entry name" value="GlaH"/>
</dbReference>
<dbReference type="InterPro" id="IPR042098">
    <property type="entry name" value="TauD-like_sf"/>
</dbReference>
<dbReference type="NCBIfam" id="NF002814">
    <property type="entry name" value="PRK02963.1"/>
    <property type="match status" value="1"/>
</dbReference>
<dbReference type="Pfam" id="PF08943">
    <property type="entry name" value="CsiD"/>
    <property type="match status" value="1"/>
</dbReference>
<dbReference type="SUPFAM" id="SSF51197">
    <property type="entry name" value="Clavaminate synthase-like"/>
    <property type="match status" value="1"/>
</dbReference>
<evidence type="ECO:0000255" key="1">
    <source>
        <dbReference type="HAMAP-Rule" id="MF_01083"/>
    </source>
</evidence>
<protein>
    <recommendedName>
        <fullName evidence="1">Glutarate 2-hydroxylase</fullName>
        <shortName evidence="1">G-2-H</shortName>
        <ecNumber evidence="1">1.14.11.64</ecNumber>
    </recommendedName>
</protein>
<reference key="1">
    <citation type="journal article" date="2009" name="PLoS Genet.">
        <title>Organised genome dynamics in the Escherichia coli species results in highly diverse adaptive paths.</title>
        <authorList>
            <person name="Touchon M."/>
            <person name="Hoede C."/>
            <person name="Tenaillon O."/>
            <person name="Barbe V."/>
            <person name="Baeriswyl S."/>
            <person name="Bidet P."/>
            <person name="Bingen E."/>
            <person name="Bonacorsi S."/>
            <person name="Bouchier C."/>
            <person name="Bouvet O."/>
            <person name="Calteau A."/>
            <person name="Chiapello H."/>
            <person name="Clermont O."/>
            <person name="Cruveiller S."/>
            <person name="Danchin A."/>
            <person name="Diard M."/>
            <person name="Dossat C."/>
            <person name="Karoui M.E."/>
            <person name="Frapy E."/>
            <person name="Garry L."/>
            <person name="Ghigo J.M."/>
            <person name="Gilles A.M."/>
            <person name="Johnson J."/>
            <person name="Le Bouguenec C."/>
            <person name="Lescat M."/>
            <person name="Mangenot S."/>
            <person name="Martinez-Jehanne V."/>
            <person name="Matic I."/>
            <person name="Nassif X."/>
            <person name="Oztas S."/>
            <person name="Petit M.A."/>
            <person name="Pichon C."/>
            <person name="Rouy Z."/>
            <person name="Ruf C.S."/>
            <person name="Schneider D."/>
            <person name="Tourret J."/>
            <person name="Vacherie B."/>
            <person name="Vallenet D."/>
            <person name="Medigue C."/>
            <person name="Rocha E.P.C."/>
            <person name="Denamur E."/>
        </authorList>
    </citation>
    <scope>NUCLEOTIDE SEQUENCE [LARGE SCALE GENOMIC DNA]</scope>
    <source>
        <strain>55989 / EAEC</strain>
    </source>
</reference>
<proteinExistence type="inferred from homology"/>
<organism>
    <name type="scientific">Escherichia coli (strain 55989 / EAEC)</name>
    <dbReference type="NCBI Taxonomy" id="585055"/>
    <lineage>
        <taxon>Bacteria</taxon>
        <taxon>Pseudomonadati</taxon>
        <taxon>Pseudomonadota</taxon>
        <taxon>Gammaproteobacteria</taxon>
        <taxon>Enterobacterales</taxon>
        <taxon>Enterobacteriaceae</taxon>
        <taxon>Escherichia</taxon>
    </lineage>
</organism>
<gene>
    <name evidence="1" type="primary">glaH</name>
    <name type="ordered locus">EC55989_2927</name>
</gene>
<keyword id="KW-0223">Dioxygenase</keyword>
<keyword id="KW-0408">Iron</keyword>
<keyword id="KW-0479">Metal-binding</keyword>
<keyword id="KW-0560">Oxidoreductase</keyword>
<keyword id="KW-1185">Reference proteome</keyword>
<sequence>MNALTAVHNNAVDSGQDYSGFTLIPSAQSPRLLELTFTEQTTKQFLEQVAEWPVQALEYKSFLRFRVGKILDDLCANQLQPLLLKTLLNRAEGALLINAVGIDDVAQADEMVKLATAVAHLIGRSNFDAMSGQYYARFVVKNVDNSDSYLRQPHRVMELHNDGTYVEEITDYVLMMKIDEQNMQGGNSLLLHLDDWEHLDHYFRHPLARRPMRFAAPPSKNVSKDVFHPVFDVDQQGRPVMRYIDQFVQPKDFEEGVWLSELSDAIETSKGILSVPVPVGKFLLINNLFWLHGRDRFTPHPDLRRELMRQRGYFAYATHHYQTHQ</sequence>
<feature type="chain" id="PRO_1000149851" description="Glutarate 2-hydroxylase">
    <location>
        <begin position="1"/>
        <end position="325"/>
    </location>
</feature>
<feature type="binding site" evidence="1">
    <location>
        <position position="160"/>
    </location>
    <ligand>
        <name>Fe cation</name>
        <dbReference type="ChEBI" id="CHEBI:24875"/>
    </ligand>
</feature>
<feature type="binding site" evidence="1">
    <location>
        <position position="162"/>
    </location>
    <ligand>
        <name>Fe cation</name>
        <dbReference type="ChEBI" id="CHEBI:24875"/>
    </ligand>
</feature>
<feature type="binding site" evidence="1">
    <location>
        <position position="292"/>
    </location>
    <ligand>
        <name>Fe cation</name>
        <dbReference type="ChEBI" id="CHEBI:24875"/>
    </ligand>
</feature>
<name>GLAH_ECO55</name>